<keyword id="KW-0029">Amino-acid transport</keyword>
<keyword id="KW-1003">Cell membrane</keyword>
<keyword id="KW-0868">Chloride</keyword>
<keyword id="KW-0967">Endosome</keyword>
<keyword id="KW-0325">Glycoprotein</keyword>
<keyword id="KW-0472">Membrane</keyword>
<keyword id="KW-0479">Metal-binding</keyword>
<keyword id="KW-0597">Phosphoprotein</keyword>
<keyword id="KW-0630">Potassium</keyword>
<keyword id="KW-1185">Reference proteome</keyword>
<keyword id="KW-0915">Sodium</keyword>
<keyword id="KW-0769">Symport</keyword>
<keyword id="KW-0770">Synapse</keyword>
<keyword id="KW-0771">Synaptosome</keyword>
<keyword id="KW-0812">Transmembrane</keyword>
<keyword id="KW-1133">Transmembrane helix</keyword>
<keyword id="KW-0813">Transport</keyword>
<dbReference type="EMBL" id="L12411">
    <property type="protein sequence ID" value="AAA31257.1"/>
    <property type="molecule type" value="mRNA"/>
</dbReference>
<dbReference type="PIR" id="S28902">
    <property type="entry name" value="S28902"/>
</dbReference>
<dbReference type="RefSeq" id="NP_001075718.1">
    <property type="nucleotide sequence ID" value="NM_001082249.1"/>
</dbReference>
<dbReference type="SMR" id="P31597"/>
<dbReference type="FunCoup" id="P31597">
    <property type="interactions" value="68"/>
</dbReference>
<dbReference type="STRING" id="9986.ENSOCUP00000022489"/>
<dbReference type="GlyCosmos" id="P31597">
    <property type="glycosylation" value="3 sites, No reported glycans"/>
</dbReference>
<dbReference type="PaxDb" id="9986-ENSOCUP00000022489"/>
<dbReference type="GeneID" id="100009070"/>
<dbReference type="KEGG" id="ocu:100009070"/>
<dbReference type="CTD" id="6505"/>
<dbReference type="eggNOG" id="KOG3787">
    <property type="taxonomic scope" value="Eukaryota"/>
</dbReference>
<dbReference type="InParanoid" id="P31597"/>
<dbReference type="OrthoDB" id="5877963at2759"/>
<dbReference type="Proteomes" id="UP000001811">
    <property type="component" value="Unplaced"/>
</dbReference>
<dbReference type="GO" id="GO:0016324">
    <property type="term" value="C:apical plasma membrane"/>
    <property type="evidence" value="ECO:0000250"/>
    <property type="project" value="UniProtKB"/>
</dbReference>
<dbReference type="GO" id="GO:0031901">
    <property type="term" value="C:early endosome membrane"/>
    <property type="evidence" value="ECO:0007669"/>
    <property type="project" value="UniProtKB-SubCell"/>
</dbReference>
<dbReference type="GO" id="GO:0031902">
    <property type="term" value="C:late endosome membrane"/>
    <property type="evidence" value="ECO:0007669"/>
    <property type="project" value="UniProtKB-SubCell"/>
</dbReference>
<dbReference type="GO" id="GO:0043005">
    <property type="term" value="C:neuron projection"/>
    <property type="evidence" value="ECO:0007669"/>
    <property type="project" value="UniProtKB-KW"/>
</dbReference>
<dbReference type="GO" id="GO:0005886">
    <property type="term" value="C:plasma membrane"/>
    <property type="evidence" value="ECO:0000250"/>
    <property type="project" value="UniProtKB"/>
</dbReference>
<dbReference type="GO" id="GO:0055038">
    <property type="term" value="C:recycling endosome membrane"/>
    <property type="evidence" value="ECO:0007669"/>
    <property type="project" value="UniProtKB-SubCell"/>
</dbReference>
<dbReference type="GO" id="GO:0045202">
    <property type="term" value="C:synapse"/>
    <property type="evidence" value="ECO:0007669"/>
    <property type="project" value="UniProtKB-SubCell"/>
</dbReference>
<dbReference type="GO" id="GO:0015108">
    <property type="term" value="F:chloride transmembrane transporter activity"/>
    <property type="evidence" value="ECO:0000250"/>
    <property type="project" value="UniProtKB"/>
</dbReference>
<dbReference type="GO" id="GO:0033229">
    <property type="term" value="F:cysteine transmembrane transporter activity"/>
    <property type="evidence" value="ECO:0000250"/>
    <property type="project" value="UniProtKB"/>
</dbReference>
<dbReference type="GO" id="GO:0015501">
    <property type="term" value="F:glutamate:sodium symporter activity"/>
    <property type="evidence" value="ECO:0000314"/>
    <property type="project" value="UniProtKB"/>
</dbReference>
<dbReference type="GO" id="GO:0005314">
    <property type="term" value="F:high-affinity L-glutamate transmembrane transporter activity"/>
    <property type="evidence" value="ECO:0000314"/>
    <property type="project" value="UniProtKB"/>
</dbReference>
<dbReference type="GO" id="GO:0005313">
    <property type="term" value="F:L-glutamate transmembrane transporter activity"/>
    <property type="evidence" value="ECO:0000250"/>
    <property type="project" value="UniProtKB"/>
</dbReference>
<dbReference type="GO" id="GO:0046872">
    <property type="term" value="F:metal ion binding"/>
    <property type="evidence" value="ECO:0007669"/>
    <property type="project" value="UniProtKB-KW"/>
</dbReference>
<dbReference type="GO" id="GO:1902476">
    <property type="term" value="P:chloride transmembrane transport"/>
    <property type="evidence" value="ECO:0000250"/>
    <property type="project" value="UniProtKB"/>
</dbReference>
<dbReference type="GO" id="GO:0042883">
    <property type="term" value="P:cysteine transport"/>
    <property type="evidence" value="ECO:0000250"/>
    <property type="project" value="UniProtKB"/>
</dbReference>
<dbReference type="GO" id="GO:0070779">
    <property type="term" value="P:D-aspartate import across plasma membrane"/>
    <property type="evidence" value="ECO:0000314"/>
    <property type="project" value="UniProtKB"/>
</dbReference>
<dbReference type="GO" id="GO:0140009">
    <property type="term" value="P:L-aspartate import across plasma membrane"/>
    <property type="evidence" value="ECO:0000314"/>
    <property type="project" value="UniProtKB"/>
</dbReference>
<dbReference type="GO" id="GO:0098712">
    <property type="term" value="P:L-glutamate import across plasma membrane"/>
    <property type="evidence" value="ECO:0000250"/>
    <property type="project" value="UniProtKB"/>
</dbReference>
<dbReference type="GO" id="GO:0015813">
    <property type="term" value="P:L-glutamate transmembrane transport"/>
    <property type="evidence" value="ECO:0000250"/>
    <property type="project" value="UniProtKB"/>
</dbReference>
<dbReference type="FunFam" id="1.10.3860.10:FF:000002">
    <property type="entry name" value="Amino acid transporter"/>
    <property type="match status" value="1"/>
</dbReference>
<dbReference type="Gene3D" id="1.10.3860.10">
    <property type="entry name" value="Sodium:dicarboxylate symporter"/>
    <property type="match status" value="1"/>
</dbReference>
<dbReference type="InterPro" id="IPR050746">
    <property type="entry name" value="DAACS"/>
</dbReference>
<dbReference type="InterPro" id="IPR001991">
    <property type="entry name" value="Na-dicarboxylate_symporter"/>
</dbReference>
<dbReference type="InterPro" id="IPR018107">
    <property type="entry name" value="Na-dicarboxylate_symporter_CS"/>
</dbReference>
<dbReference type="InterPro" id="IPR036458">
    <property type="entry name" value="Na:dicarbo_symporter_sf"/>
</dbReference>
<dbReference type="PANTHER" id="PTHR11958:SF109">
    <property type="entry name" value="EXCITATORY AMINO ACID TRANSPORTER 3"/>
    <property type="match status" value="1"/>
</dbReference>
<dbReference type="PANTHER" id="PTHR11958">
    <property type="entry name" value="SODIUM/DICARBOXYLATE SYMPORTER-RELATED"/>
    <property type="match status" value="1"/>
</dbReference>
<dbReference type="Pfam" id="PF00375">
    <property type="entry name" value="SDF"/>
    <property type="match status" value="1"/>
</dbReference>
<dbReference type="PRINTS" id="PR00173">
    <property type="entry name" value="EDTRNSPORT"/>
</dbReference>
<dbReference type="SUPFAM" id="SSF118215">
    <property type="entry name" value="Proton glutamate symport protein"/>
    <property type="match status" value="1"/>
</dbReference>
<dbReference type="PROSITE" id="PS00713">
    <property type="entry name" value="NA_DICARBOXYL_SYMP_1"/>
    <property type="match status" value="1"/>
</dbReference>
<dbReference type="PROSITE" id="PS00714">
    <property type="entry name" value="NA_DICARBOXYL_SYMP_2"/>
    <property type="match status" value="1"/>
</dbReference>
<proteinExistence type="evidence at protein level"/>
<comment type="function">
    <text evidence="2 3 5">Sodium-dependent, high-affinity amino acid transporter that mediates the uptake of L-glutamate and also L-aspartate and D-aspartate (PubMed:1280334). Can also transport L-cysteine (By similarity). Functions as a symporter that transports one amino acid molecule together with two or three Na(+) ions and one proton, in parallel with the counter-transport of one K(+) ion (PubMed:1280334). Mediates Cl(-) flux that is not coupled to amino acid transport; this avoids the accumulation of negative charges due to aspartate and Na(+) symport. Plays an important role in L-glutamate and L-aspartate reabsorption in renal tubuli (By similarity). Plays a redundant role in the rapid removal of released glutamate from the synaptic cleft, which is essential for terminating the postsynaptic action of glutamate (By similarity). Contributes to glutathione biosynthesis and protection against oxidative stress via its role in L-glutamate and L-cysteine transport (By similarity). Negatively regulated by ARL6IP5 (By similarity).</text>
</comment>
<comment type="catalytic activity">
    <reaction evidence="2">
        <text>K(+)(in) + L-glutamate(out) + 3 Na(+)(out) + H(+)(out) = K(+)(out) + L-glutamate(in) + 3 Na(+)(in) + H(+)(in)</text>
        <dbReference type="Rhea" id="RHEA:70699"/>
        <dbReference type="ChEBI" id="CHEBI:15378"/>
        <dbReference type="ChEBI" id="CHEBI:29101"/>
        <dbReference type="ChEBI" id="CHEBI:29103"/>
        <dbReference type="ChEBI" id="CHEBI:29985"/>
    </reaction>
</comment>
<comment type="catalytic activity">
    <reaction evidence="2">
        <text>K(+)(in) + L-aspartate(out) + 3 Na(+)(out) + H(+)(out) = K(+)(out) + L-aspartate(in) + 3 Na(+)(in) + H(+)(in)</text>
        <dbReference type="Rhea" id="RHEA:70851"/>
        <dbReference type="ChEBI" id="CHEBI:15378"/>
        <dbReference type="ChEBI" id="CHEBI:29101"/>
        <dbReference type="ChEBI" id="CHEBI:29103"/>
        <dbReference type="ChEBI" id="CHEBI:29991"/>
    </reaction>
</comment>
<comment type="catalytic activity">
    <reaction evidence="2">
        <text>D-aspartate(out) + K(+)(in) + 3 Na(+)(out) + H(+)(out) = D-aspartate(in) + K(+)(out) + 3 Na(+)(in) + H(+)(in)</text>
        <dbReference type="Rhea" id="RHEA:71379"/>
        <dbReference type="ChEBI" id="CHEBI:15378"/>
        <dbReference type="ChEBI" id="CHEBI:29101"/>
        <dbReference type="ChEBI" id="CHEBI:29103"/>
        <dbReference type="ChEBI" id="CHEBI:29990"/>
    </reaction>
</comment>
<comment type="catalytic activity">
    <reaction evidence="2">
        <text>K(+)(in) + L-cysteine(out) + 3 Na(+)(out) + H(+)(out) = K(+)(out) + L-cysteine(in) + 3 Na(+)(in) + H(+)(in)</text>
        <dbReference type="Rhea" id="RHEA:82559"/>
        <dbReference type="ChEBI" id="CHEBI:15378"/>
        <dbReference type="ChEBI" id="CHEBI:29101"/>
        <dbReference type="ChEBI" id="CHEBI:29103"/>
        <dbReference type="ChEBI" id="CHEBI:35235"/>
    </reaction>
</comment>
<comment type="biophysicochemical properties">
    <kinetics>
        <KM evidence="5">12 uM for L-glutamate</KM>
        <KM evidence="5">6.5 uM for L-aspartate</KM>
        <KM evidence="5">7.5 uM for D-aspartate</KM>
    </kinetics>
</comment>
<comment type="subunit">
    <text evidence="3 7">Homotrimer (Probable). Interacts with ARL6IP5. Interacts with RTN2 (via N-terminus); the interaction promotes cell surface expression of SLC1A1. Interacts with SORCS2; this interaction is important for normal expression at the cell membrane (By similarity).</text>
</comment>
<comment type="subcellular location">
    <subcellularLocation>
        <location evidence="5">Cell membrane</location>
        <topology evidence="1">Multi-pass membrane protein</topology>
    </subcellularLocation>
    <subcellularLocation>
        <location evidence="2">Apical cell membrane</location>
        <topology evidence="1">Multi-pass membrane protein</topology>
    </subcellularLocation>
    <subcellularLocation>
        <location evidence="3">Synapse</location>
        <location evidence="3">Synaptosome</location>
    </subcellularLocation>
    <subcellularLocation>
        <location evidence="3">Early endosome membrane</location>
    </subcellularLocation>
    <subcellularLocation>
        <location evidence="3">Late endosome membrane</location>
    </subcellularLocation>
    <subcellularLocation>
        <location evidence="3">Recycling endosome membrane</location>
    </subcellularLocation>
</comment>
<comment type="tissue specificity">
    <text evidence="5">Brain, but also small intestine, kidney, liver and heart.</text>
</comment>
<comment type="domain">
    <text evidence="1">Contains eight transmembrane regions plus two helical hairpins that dip into the membrane. These helical hairpin structures play an important role in the transport process. The first enters the membrane from the cytoplasmic side, the second one from the extracellular side. During the transport cycle, the regions involved in amino acid transport, and especially the helical hairpins, move vertically by about 15-18 Angstroms, alternating between exposure to the aqueous phase and reinsertion in the lipid bilayer. In contrast, the regions involved in trimerization do not move.</text>
</comment>
<comment type="miscellaneous">
    <text evidence="5">Transport does not depend on chloride.</text>
</comment>
<comment type="similarity">
    <text evidence="7">Belongs to the dicarboxylate/amino acid:cation symporter (DAACS) (TC 2.A.23) family. SLC1A1 subfamily.</text>
</comment>
<name>EAA3_RABIT</name>
<organism>
    <name type="scientific">Oryctolagus cuniculus</name>
    <name type="common">Rabbit</name>
    <dbReference type="NCBI Taxonomy" id="9986"/>
    <lineage>
        <taxon>Eukaryota</taxon>
        <taxon>Metazoa</taxon>
        <taxon>Chordata</taxon>
        <taxon>Craniata</taxon>
        <taxon>Vertebrata</taxon>
        <taxon>Euteleostomi</taxon>
        <taxon>Mammalia</taxon>
        <taxon>Eutheria</taxon>
        <taxon>Euarchontoglires</taxon>
        <taxon>Glires</taxon>
        <taxon>Lagomorpha</taxon>
        <taxon>Leporidae</taxon>
        <taxon>Oryctolagus</taxon>
    </lineage>
</organism>
<accession>P31597</accession>
<gene>
    <name type="primary">SLC1A1</name>
    <name evidence="6" type="synonym">EAAC1</name>
    <name type="synonym">EAAT3</name>
</gene>
<protein>
    <recommendedName>
        <fullName>Excitatory amino acid transporter 3</fullName>
    </recommendedName>
    <alternativeName>
        <fullName evidence="6">Excitatory amino-acid carrier 1</fullName>
    </alternativeName>
    <alternativeName>
        <fullName>Sodium-dependent glutamate/aspartate transporter 3</fullName>
    </alternativeName>
    <alternativeName>
        <fullName>Solute carrier family 1 member 1</fullName>
    </alternativeName>
</protein>
<reference key="1">
    <citation type="journal article" date="1992" name="Nature">
        <title>Primary structure and functional characterization of a high-affinity glutamate transporter.</title>
        <authorList>
            <person name="Kanai Y."/>
            <person name="Hediger M.A."/>
        </authorList>
    </citation>
    <scope>NUCLEOTIDE SEQUENCE [MRNA]</scope>
    <scope>FUNCTION</scope>
    <scope>SUBCELLULAR LOCATION</scope>
    <scope>TISSUE SPECIFICITY</scope>
    <scope>BIOPHYSICOCHEMICAL PROPERTIES</scope>
    <source>
        <tissue>Intestine</tissue>
    </source>
</reference>
<sequence>MGKPARKGCDSKRFLKNNWLLLSTVVAVVLGIVIGVLVREYSNLSTLDKFYFAFPGEILMRMLKLVILPLIVSSMITGVAALDSNVSGKIGLRAVLYYFCTTIIAVILGIVLVVSIKPGVTQKVDEIDRTGSTPEVSTVDAMLDLIRNMFPENLVQACFQQYKTTREEVTASDDTGKNGTEESVTAVMTTAVSENRTKEYRVVGLYSDGINVLGLIVFCLVFGLVIGKMGEKGQILVDFFNALSDATMKIVQIIMCYMPLGILFLIAGKIIEVEDWEIFRKLGLYMVTVLSGLAIHSIVILPLIYFIVVRKNPFRFAMGMTQALLTALMISSSSATLPVTFRCAEEKNRVDKRITRFVLPVGATINMDGTALYEAVAAVFIAQLNDMDLSIGQIITISVTATAASIGAAGVPQAGLVTMVIVLSAVGLPAEDVTLIIAVDWLLDRFRTVVNVLGDAFGTGIVEKLSKKELEQMDVSSEVNIVNPFALESATLDNEDSDTKKSYINGGFAVDKSDTISFTQTSQF</sequence>
<evidence type="ECO:0000250" key="1">
    <source>
        <dbReference type="UniProtKB" id="P43003"/>
    </source>
</evidence>
<evidence type="ECO:0000250" key="2">
    <source>
        <dbReference type="UniProtKB" id="P43005"/>
    </source>
</evidence>
<evidence type="ECO:0000250" key="3">
    <source>
        <dbReference type="UniProtKB" id="P51906"/>
    </source>
</evidence>
<evidence type="ECO:0000255" key="4"/>
<evidence type="ECO:0000269" key="5">
    <source>
    </source>
</evidence>
<evidence type="ECO:0000303" key="6">
    <source>
    </source>
</evidence>
<evidence type="ECO:0000305" key="7"/>
<feature type="chain" id="PRO_0000202068" description="Excitatory amino acid transporter 3">
    <location>
        <begin position="1"/>
        <end position="524"/>
    </location>
</feature>
<feature type="topological domain" description="Cytoplasmic" evidence="7">
    <location>
        <begin position="1"/>
        <end position="18"/>
    </location>
</feature>
<feature type="transmembrane region" description="Helical" evidence="4">
    <location>
        <begin position="19"/>
        <end position="38"/>
    </location>
</feature>
<feature type="topological domain" description="Extracellular" evidence="7">
    <location>
        <begin position="39"/>
        <end position="61"/>
    </location>
</feature>
<feature type="transmembrane region" description="Helical" evidence="4">
    <location>
        <begin position="62"/>
        <end position="82"/>
    </location>
</feature>
<feature type="topological domain" description="Cytoplasmic" evidence="7">
    <location>
        <begin position="83"/>
        <end position="93"/>
    </location>
</feature>
<feature type="transmembrane region" description="Helical" evidence="4">
    <location>
        <begin position="94"/>
        <end position="114"/>
    </location>
</feature>
<feature type="topological domain" description="Extracellular" evidence="7">
    <location>
        <begin position="115"/>
        <end position="205"/>
    </location>
</feature>
<feature type="transmembrane region" description="Helical; Name=4" evidence="1">
    <location>
        <begin position="206"/>
        <end position="229"/>
    </location>
</feature>
<feature type="topological domain" description="Cytoplasmic" evidence="7">
    <location>
        <begin position="230"/>
        <end position="238"/>
    </location>
</feature>
<feature type="transmembrane region" description="Helical; Name=5" evidence="1">
    <location>
        <begin position="239"/>
        <end position="266"/>
    </location>
</feature>
<feature type="topological domain" description="Extracellular" evidence="7">
    <location>
        <begin position="267"/>
        <end position="286"/>
    </location>
</feature>
<feature type="transmembrane region" description="Helical; Name=6" evidence="1">
    <location>
        <begin position="287"/>
        <end position="308"/>
    </location>
</feature>
<feature type="topological domain" description="Cytoplasmic" evidence="7">
    <location>
        <begin position="309"/>
        <end position="313"/>
    </location>
</feature>
<feature type="intramembrane region" description="Discontinuously helical" evidence="1">
    <location>
        <begin position="314"/>
        <end position="344"/>
    </location>
</feature>
<feature type="topological domain" description="Cytoplasmic" evidence="7">
    <location>
        <begin position="345"/>
        <end position="353"/>
    </location>
</feature>
<feature type="transmembrane region" description="Helical; Name=7" evidence="1">
    <location>
        <begin position="354"/>
        <end position="380"/>
    </location>
</feature>
<feature type="topological domain" description="Extracellular" evidence="7">
    <location>
        <begin position="381"/>
        <end position="393"/>
    </location>
</feature>
<feature type="intramembrane region" description="Discontinuously helical" evidence="1">
    <location>
        <begin position="394"/>
        <end position="427"/>
    </location>
</feature>
<feature type="topological domain" description="Extracellular" evidence="7">
    <location>
        <begin position="428"/>
        <end position="440"/>
    </location>
</feature>
<feature type="transmembrane region" description="Helical; Name=8" evidence="1">
    <location>
        <begin position="441"/>
        <end position="462"/>
    </location>
</feature>
<feature type="topological domain" description="Cytoplasmic" evidence="7">
    <location>
        <begin position="463"/>
        <end position="524"/>
    </location>
</feature>
<feature type="binding site" evidence="2">
    <location>
        <position position="98"/>
    </location>
    <ligand>
        <name>Na(+)</name>
        <dbReference type="ChEBI" id="CHEBI:29101"/>
        <label>1</label>
    </ligand>
</feature>
<feature type="binding site" evidence="2">
    <location>
        <position position="101"/>
    </location>
    <ligand>
        <name>Na(+)</name>
        <dbReference type="ChEBI" id="CHEBI:29101"/>
        <label>1</label>
    </ligand>
</feature>
<feature type="binding site" evidence="2">
    <location>
        <position position="102"/>
    </location>
    <ligand>
        <name>Na(+)</name>
        <dbReference type="ChEBI" id="CHEBI:29101"/>
        <label>1</label>
    </ligand>
</feature>
<feature type="binding site" evidence="2">
    <location>
        <position position="331"/>
    </location>
    <ligand>
        <name>L-aspartate</name>
        <dbReference type="ChEBI" id="CHEBI:29991"/>
    </ligand>
</feature>
<feature type="binding site" evidence="2">
    <location>
        <position position="333"/>
    </location>
    <ligand>
        <name>L-aspartate</name>
        <dbReference type="ChEBI" id="CHEBI:29991"/>
    </ligand>
</feature>
<feature type="binding site" evidence="2">
    <location>
        <position position="362"/>
    </location>
    <ligand>
        <name>Na(+)</name>
        <dbReference type="ChEBI" id="CHEBI:29101"/>
        <label>1</label>
    </ligand>
</feature>
<feature type="binding site" evidence="2">
    <location>
        <position position="364"/>
    </location>
    <ligand>
        <name>Na(+)</name>
        <dbReference type="ChEBI" id="CHEBI:29101"/>
        <label>2</label>
    </ligand>
</feature>
<feature type="binding site" evidence="2">
    <location>
        <position position="366"/>
    </location>
    <ligand>
        <name>Na(+)</name>
        <dbReference type="ChEBI" id="CHEBI:29101"/>
        <label>1</label>
    </ligand>
</feature>
<feature type="binding site" evidence="2">
    <location>
        <position position="368"/>
    </location>
    <ligand>
        <name>Na(+)</name>
        <dbReference type="ChEBI" id="CHEBI:29101"/>
        <label>1</label>
    </ligand>
</feature>
<feature type="binding site" evidence="2">
    <location>
        <position position="370"/>
    </location>
    <ligand>
        <name>L-aspartate</name>
        <dbReference type="ChEBI" id="CHEBI:29991"/>
    </ligand>
</feature>
<feature type="binding site" evidence="2">
    <location>
        <position position="405"/>
    </location>
    <ligand>
        <name>Na(+)</name>
        <dbReference type="ChEBI" id="CHEBI:29101"/>
        <label>2</label>
    </ligand>
</feature>
<feature type="binding site" evidence="2">
    <location>
        <position position="406"/>
    </location>
    <ligand>
        <name>Na(+)</name>
        <dbReference type="ChEBI" id="CHEBI:29101"/>
        <label>2</label>
    </ligand>
</feature>
<feature type="binding site" evidence="2">
    <location>
        <position position="408"/>
    </location>
    <ligand>
        <name>Na(+)</name>
        <dbReference type="ChEBI" id="CHEBI:29101"/>
        <label>2</label>
    </ligand>
</feature>
<feature type="binding site" evidence="2">
    <location>
        <position position="411"/>
    </location>
    <ligand>
        <name>L-aspartate</name>
        <dbReference type="ChEBI" id="CHEBI:29991"/>
    </ligand>
</feature>
<feature type="binding site" evidence="2">
    <location>
        <position position="447"/>
    </location>
    <ligand>
        <name>L-aspartate</name>
        <dbReference type="ChEBI" id="CHEBI:29991"/>
    </ligand>
</feature>
<feature type="binding site" evidence="2">
    <location>
        <position position="448"/>
    </location>
    <ligand>
        <name>L-aspartate</name>
        <dbReference type="ChEBI" id="CHEBI:29991"/>
    </ligand>
</feature>
<feature type="binding site" evidence="2">
    <location>
        <position position="451"/>
    </location>
    <ligand>
        <name>L-aspartate</name>
        <dbReference type="ChEBI" id="CHEBI:29991"/>
    </ligand>
</feature>
<feature type="binding site" evidence="2">
    <location>
        <position position="451"/>
    </location>
    <ligand>
        <name>Na(+)</name>
        <dbReference type="ChEBI" id="CHEBI:29101"/>
        <label>1</label>
    </ligand>
</feature>
<feature type="binding site" evidence="2">
    <location>
        <position position="455"/>
    </location>
    <ligand>
        <name>Na(+)</name>
        <dbReference type="ChEBI" id="CHEBI:29101"/>
        <label>1</label>
    </ligand>
</feature>
<feature type="modified residue" description="Phosphoserine" evidence="3">
    <location>
        <position position="517"/>
    </location>
</feature>
<feature type="modified residue" description="Phosphoserine" evidence="3">
    <location>
        <position position="522"/>
    </location>
</feature>
<feature type="glycosylation site" description="N-linked (GlcNAc...) asparagine" evidence="4">
    <location>
        <position position="43"/>
    </location>
</feature>
<feature type="glycosylation site" description="N-linked (GlcNAc...) asparagine" evidence="4">
    <location>
        <position position="178"/>
    </location>
</feature>
<feature type="glycosylation site" description="N-linked (GlcNAc...) asparagine" evidence="4">
    <location>
        <position position="195"/>
    </location>
</feature>